<gene>
    <name type="primary">acn</name>
    <name type="ordered locus">lpg1690</name>
</gene>
<sequence length="891" mass="98209">MKVGQDSLSTKSQLTVDGKTYNYYSLKEAENKHFKGINRLPYSLKVLLENLLRFEDGNTVTTKDIKAIADWLHNKTSQHEIAFRPTRVLMQDFTGVPAVVDLAAMRTAIVKMGGNADKISPLSPVDLVIDHSVMVDKFASADALEVNTKIEIERNKERYEFLRWGQKAFSNFQVVPPGTGICHQVNLEYLGKTVWNSENDGQLYAYPDTLVGTDSHTTMINGLGVLGWGVGGIEAEAAMLGQPVSMLIPEVIGFKLSGKLKEGITATDLVLTVTQMLRKKGVVGKFVEFYGPGLNDLPLADRATISNMAPEYGATCGFFPVDKETIKYLELTGRDKHTIALVEAYAKAQGMWYDKDNEEPVFTDSLHLDLGSVEPSLAGPKRPQDKVNLSSLPVEFNNFLIEVGKEKEKEKTFAVKNKDFQMKHGHVVIAAITSCTNTSNPSVLMAAGLVAKKAIEKGLQRKPWVKSSLAPGSKVVTDYLRHAGLQTYLDQLGFNLVGYGCTTCIGNSGPLPDDISHCVAEHDLVVSSVLSGNRNFEGRVHPQVRANWLASPPLVVAYALCGTTCSDLSREPIGQDKEGNDVYLKDIWPSNEEIAAEVAKVSGTMFRKEYAEVFKGDAHWQAIQTSSGQTYEWNPDSTYIQHPPFFENLSLKPEPLKPIKQAYVLALFGDSITTDHISPAGSIKASSPAGLYLKSKGVDEKDFNSYGSRRGNHEVMMRGTFANIRIRNEMTPGQEGGVTRYVPTGETMSIYDAAMRYQENQQDLVIIAGKEYGTGSSRDWAAKGTNLLGVKAVITESFERIHRSNLIGMGILPLQFKEGTTRKTLKLDGSERISIEISDKLTPGAMVPVTIERQDGDIEKIETLCRIDTADELEYYKNGGILQYVLRKISS</sequence>
<evidence type="ECO:0000250" key="1">
    <source>
        <dbReference type="UniProtKB" id="P09339"/>
    </source>
</evidence>
<evidence type="ECO:0000250" key="2">
    <source>
        <dbReference type="UniProtKB" id="P36683"/>
    </source>
</evidence>
<evidence type="ECO:0000250" key="3">
    <source>
        <dbReference type="UniProtKB" id="Q8ZP52"/>
    </source>
</evidence>
<evidence type="ECO:0000269" key="4">
    <source>
    </source>
</evidence>
<evidence type="ECO:0000303" key="5">
    <source>
    </source>
</evidence>
<evidence type="ECO:0000305" key="6"/>
<evidence type="ECO:0000305" key="7">
    <source>
    </source>
</evidence>
<reference key="1">
    <citation type="journal article" date="1993" name="J. Bacteriol.">
        <title>The major iron-containing protein of Legionella pneumophila is an aconitase homologous with the human iron-responsive element-binding protein.</title>
        <authorList>
            <person name="Mengaud J.M."/>
            <person name="Horwitz M.A."/>
        </authorList>
    </citation>
    <scope>NUCLEOTIDE SEQUENCE [GENOMIC DNA]</scope>
    <scope>FUNCTION</scope>
    <scope>SUBUNIT</scope>
</reference>
<reference key="2">
    <citation type="journal article" date="2004" name="Science">
        <title>The genomic sequence of the accidental pathogen Legionella pneumophila.</title>
        <authorList>
            <person name="Chien M."/>
            <person name="Morozova I."/>
            <person name="Shi S."/>
            <person name="Sheng H."/>
            <person name="Chen J."/>
            <person name="Gomez S.M."/>
            <person name="Asamani G."/>
            <person name="Hill K."/>
            <person name="Nuara J."/>
            <person name="Feder M."/>
            <person name="Rineer J."/>
            <person name="Greenberg J.J."/>
            <person name="Steshenko V."/>
            <person name="Park S.H."/>
            <person name="Zhao B."/>
            <person name="Teplitskaya E."/>
            <person name="Edwards J.R."/>
            <person name="Pampou S."/>
            <person name="Georghiou A."/>
            <person name="Chou I.-C."/>
            <person name="Iannuccilli W."/>
            <person name="Ulz M.E."/>
            <person name="Kim D.H."/>
            <person name="Geringer-Sameth A."/>
            <person name="Goldsberry C."/>
            <person name="Morozov P."/>
            <person name="Fischer S.G."/>
            <person name="Segal G."/>
            <person name="Qu X."/>
            <person name="Rzhetsky A."/>
            <person name="Zhang P."/>
            <person name="Cayanis E."/>
            <person name="De Jong P.J."/>
            <person name="Ju J."/>
            <person name="Kalachikov S."/>
            <person name="Shuman H.A."/>
            <person name="Russo J.J."/>
        </authorList>
    </citation>
    <scope>NUCLEOTIDE SEQUENCE [LARGE SCALE GENOMIC DNA]</scope>
    <source>
        <strain>Philadelphia 1 / ATCC 33152 / DSM 7513</strain>
    </source>
</reference>
<dbReference type="EC" id="4.2.1.3" evidence="3"/>
<dbReference type="EC" id="4.2.1.99" evidence="3"/>
<dbReference type="EMBL" id="L22081">
    <property type="protein sequence ID" value="AAA25295.1"/>
    <property type="molecule type" value="Genomic_DNA"/>
</dbReference>
<dbReference type="EMBL" id="AE017354">
    <property type="protein sequence ID" value="AAU27770.1"/>
    <property type="molecule type" value="Genomic_DNA"/>
</dbReference>
<dbReference type="PIR" id="B48642">
    <property type="entry name" value="B48642"/>
</dbReference>
<dbReference type="RefSeq" id="YP_095717.1">
    <property type="nucleotide sequence ID" value="NC_002942.5"/>
</dbReference>
<dbReference type="SMR" id="P37032"/>
<dbReference type="STRING" id="272624.lpg1690"/>
<dbReference type="PaxDb" id="272624-lpg1690"/>
<dbReference type="KEGG" id="lpn:lpg1690"/>
<dbReference type="PATRIC" id="fig|272624.6.peg.1771"/>
<dbReference type="eggNOG" id="COG1048">
    <property type="taxonomic scope" value="Bacteria"/>
</dbReference>
<dbReference type="HOGENOM" id="CLU_013476_2_1_6"/>
<dbReference type="OrthoDB" id="9764318at2"/>
<dbReference type="UniPathway" id="UPA00223">
    <property type="reaction ID" value="UER00718"/>
</dbReference>
<dbReference type="UniPathway" id="UPA00946"/>
<dbReference type="Proteomes" id="UP000000609">
    <property type="component" value="Chromosome"/>
</dbReference>
<dbReference type="GO" id="GO:0047456">
    <property type="term" value="F:2-methylisocitrate dehydratase activity"/>
    <property type="evidence" value="ECO:0000250"/>
    <property type="project" value="UniProtKB"/>
</dbReference>
<dbReference type="GO" id="GO:0051539">
    <property type="term" value="F:4 iron, 4 sulfur cluster binding"/>
    <property type="evidence" value="ECO:0000250"/>
    <property type="project" value="UniProtKB"/>
</dbReference>
<dbReference type="GO" id="GO:0003994">
    <property type="term" value="F:aconitate hydratase activity"/>
    <property type="evidence" value="ECO:0000250"/>
    <property type="project" value="UniProtKB"/>
</dbReference>
<dbReference type="GO" id="GO:0046872">
    <property type="term" value="F:metal ion binding"/>
    <property type="evidence" value="ECO:0007669"/>
    <property type="project" value="UniProtKB-KW"/>
</dbReference>
<dbReference type="GO" id="GO:0003730">
    <property type="term" value="F:mRNA 3'-UTR binding"/>
    <property type="evidence" value="ECO:0000314"/>
    <property type="project" value="UniProtKB"/>
</dbReference>
<dbReference type="GO" id="GO:0003729">
    <property type="term" value="F:mRNA binding"/>
    <property type="evidence" value="ECO:0000314"/>
    <property type="project" value="UniProtKB"/>
</dbReference>
<dbReference type="GO" id="GO:0019679">
    <property type="term" value="P:propionate metabolic process, methylcitrate cycle"/>
    <property type="evidence" value="ECO:0000250"/>
    <property type="project" value="UniProtKB"/>
</dbReference>
<dbReference type="GO" id="GO:0006099">
    <property type="term" value="P:tricarboxylic acid cycle"/>
    <property type="evidence" value="ECO:0000250"/>
    <property type="project" value="UniProtKB"/>
</dbReference>
<dbReference type="CDD" id="cd01586">
    <property type="entry name" value="AcnA_IRP"/>
    <property type="match status" value="1"/>
</dbReference>
<dbReference type="CDD" id="cd01580">
    <property type="entry name" value="AcnA_IRP_Swivel"/>
    <property type="match status" value="1"/>
</dbReference>
<dbReference type="FunFam" id="3.20.19.10:FF:000001">
    <property type="entry name" value="Aconitate hydratase"/>
    <property type="match status" value="1"/>
</dbReference>
<dbReference type="FunFam" id="3.30.499.10:FF:000002">
    <property type="entry name" value="Aconitate hydratase"/>
    <property type="match status" value="1"/>
</dbReference>
<dbReference type="FunFam" id="3.30.499.10:FF:000020">
    <property type="entry name" value="Aconitate hydratase A"/>
    <property type="match status" value="1"/>
</dbReference>
<dbReference type="Gene3D" id="6.10.190.10">
    <property type="match status" value="1"/>
</dbReference>
<dbReference type="Gene3D" id="3.30.499.10">
    <property type="entry name" value="Aconitase, domain 3"/>
    <property type="match status" value="2"/>
</dbReference>
<dbReference type="Gene3D" id="3.20.19.10">
    <property type="entry name" value="Aconitase, domain 4"/>
    <property type="match status" value="1"/>
</dbReference>
<dbReference type="InterPro" id="IPR044137">
    <property type="entry name" value="AcnA_IRP_Swivel"/>
</dbReference>
<dbReference type="InterPro" id="IPR015931">
    <property type="entry name" value="Acnase/IPM_dHydase_lsu_aba_1/3"/>
</dbReference>
<dbReference type="InterPro" id="IPR001030">
    <property type="entry name" value="Acoase/IPM_deHydtase_lsu_aba"/>
</dbReference>
<dbReference type="InterPro" id="IPR015928">
    <property type="entry name" value="Aconitase/3IPM_dehydase_swvl"/>
</dbReference>
<dbReference type="InterPro" id="IPR006249">
    <property type="entry name" value="Aconitase/IRP2"/>
</dbReference>
<dbReference type="InterPro" id="IPR018136">
    <property type="entry name" value="Aconitase_4Fe-4S_BS"/>
</dbReference>
<dbReference type="InterPro" id="IPR036008">
    <property type="entry name" value="Aconitase_4Fe-4S_dom"/>
</dbReference>
<dbReference type="InterPro" id="IPR000573">
    <property type="entry name" value="AconitaseA/IPMdHydase_ssu_swvl"/>
</dbReference>
<dbReference type="NCBIfam" id="TIGR01341">
    <property type="entry name" value="aconitase_1"/>
    <property type="match status" value="1"/>
</dbReference>
<dbReference type="NCBIfam" id="NF006757">
    <property type="entry name" value="PRK09277.1"/>
    <property type="match status" value="1"/>
</dbReference>
<dbReference type="NCBIfam" id="NF009520">
    <property type="entry name" value="PRK12881.1"/>
    <property type="match status" value="1"/>
</dbReference>
<dbReference type="PANTHER" id="PTHR11670">
    <property type="entry name" value="ACONITASE/IRON-RESPONSIVE ELEMENT FAMILY MEMBER"/>
    <property type="match status" value="1"/>
</dbReference>
<dbReference type="Pfam" id="PF00330">
    <property type="entry name" value="Aconitase"/>
    <property type="match status" value="1"/>
</dbReference>
<dbReference type="Pfam" id="PF00694">
    <property type="entry name" value="Aconitase_C"/>
    <property type="match status" value="1"/>
</dbReference>
<dbReference type="PRINTS" id="PR00415">
    <property type="entry name" value="ACONITASE"/>
</dbReference>
<dbReference type="SUPFAM" id="SSF53732">
    <property type="entry name" value="Aconitase iron-sulfur domain"/>
    <property type="match status" value="1"/>
</dbReference>
<dbReference type="SUPFAM" id="SSF52016">
    <property type="entry name" value="LeuD/IlvD-like"/>
    <property type="match status" value="1"/>
</dbReference>
<dbReference type="PROSITE" id="PS00450">
    <property type="entry name" value="ACONITASE_1"/>
    <property type="match status" value="1"/>
</dbReference>
<dbReference type="PROSITE" id="PS01244">
    <property type="entry name" value="ACONITASE_2"/>
    <property type="match status" value="1"/>
</dbReference>
<accession>P37032</accession>
<accession>Q5ZUV2</accession>
<feature type="chain" id="PRO_0000076662" description="Aconitate hydratase A">
    <location>
        <begin position="1"/>
        <end position="891"/>
    </location>
</feature>
<feature type="binding site" evidence="2">
    <location>
        <position position="435"/>
    </location>
    <ligand>
        <name>[4Fe-4S] cluster</name>
        <dbReference type="ChEBI" id="CHEBI:49883"/>
    </ligand>
</feature>
<feature type="binding site" evidence="2">
    <location>
        <position position="501"/>
    </location>
    <ligand>
        <name>[4Fe-4S] cluster</name>
        <dbReference type="ChEBI" id="CHEBI:49883"/>
    </ligand>
</feature>
<feature type="binding site" evidence="2">
    <location>
        <position position="504"/>
    </location>
    <ligand>
        <name>[4Fe-4S] cluster</name>
        <dbReference type="ChEBI" id="CHEBI:49883"/>
    </ligand>
</feature>
<keyword id="KW-0004">4Fe-4S</keyword>
<keyword id="KW-0408">Iron</keyword>
<keyword id="KW-0411">Iron-sulfur</keyword>
<keyword id="KW-0456">Lyase</keyword>
<keyword id="KW-0479">Metal-binding</keyword>
<keyword id="KW-1185">Reference proteome</keyword>
<keyword id="KW-0694">RNA-binding</keyword>
<keyword id="KW-0816">Tricarboxylic acid cycle</keyword>
<name>ACON_LEGPH</name>
<comment type="function">
    <text evidence="3 4">Involved in the catabolism of short chain fatty acids (SCFA) via the tricarboxylic acid (TCA)(acetyl degradation route) and probably the 2-methylcitrate cycle I (propionate degradation route). Catalyzes the reversible isomerization of citrate to isocitrate via cis-aconitate. The apo form of AcnA functions as a RNA-binding regulatory protein (PubMed:8366052). Could catalyze the hydration of 2-methyl-cis-aconitate to yield (2R,3S)-2-methylisocitrate (By similarity).</text>
</comment>
<comment type="catalytic activity">
    <reaction evidence="3">
        <text>citrate = D-threo-isocitrate</text>
        <dbReference type="Rhea" id="RHEA:10336"/>
        <dbReference type="ChEBI" id="CHEBI:15562"/>
        <dbReference type="ChEBI" id="CHEBI:16947"/>
        <dbReference type="EC" id="4.2.1.3"/>
    </reaction>
</comment>
<comment type="catalytic activity">
    <reaction evidence="3">
        <text>(2S,3R)-3-hydroxybutane-1,2,3-tricarboxylate = 2-methyl-cis-aconitate + H2O</text>
        <dbReference type="Rhea" id="RHEA:17941"/>
        <dbReference type="ChEBI" id="CHEBI:15377"/>
        <dbReference type="ChEBI" id="CHEBI:57429"/>
        <dbReference type="ChEBI" id="CHEBI:57872"/>
        <dbReference type="EC" id="4.2.1.99"/>
    </reaction>
</comment>
<comment type="cofactor">
    <cofactor evidence="1">
        <name>[4Fe-4S] cluster</name>
        <dbReference type="ChEBI" id="CHEBI:49883"/>
    </cofactor>
    <text evidence="1">Binds 1 [4Fe-4S] cluster per subunit.</text>
</comment>
<comment type="pathway">
    <text evidence="6">Carbohydrate metabolism; tricarboxylic acid cycle; isocitrate from oxaloacetate: step 2/2.</text>
</comment>
<comment type="pathway">
    <text evidence="6">Organic acid metabolism; propanoate degradation.</text>
</comment>
<comment type="subunit">
    <text evidence="4">Monomer.</text>
</comment>
<comment type="similarity">
    <text evidence="6">Belongs to the aconitase/IPM isomerase family.</text>
</comment>
<protein>
    <recommendedName>
        <fullName evidence="5">Aconitate hydratase A</fullName>
        <shortName evidence="5">ACN</shortName>
        <shortName evidence="5">Aconitase</shortName>
        <ecNumber evidence="3">4.2.1.3</ecNumber>
    </recommendedName>
    <alternativeName>
        <fullName evidence="3">(2R,3S)-2-methylisocitrate dehydratase</fullName>
    </alternativeName>
    <alternativeName>
        <fullName evidence="3">(2S,3R)-3-hydroxybutane-1,2,3-tricarboxylate dehydratase</fullName>
    </alternativeName>
    <alternativeName>
        <fullName evidence="5">IP210</fullName>
    </alternativeName>
    <alternativeName>
        <fullName evidence="7">Iron-responsive protein-like</fullName>
        <shortName evidence="7">IRP-like</shortName>
    </alternativeName>
    <alternativeName>
        <fullName evidence="5">Major iron-containing protein</fullName>
        <shortName evidence="5">MICP</shortName>
    </alternativeName>
    <alternativeName>
        <fullName evidence="3">Probable 2-methyl-cis-aconitate hydratase</fullName>
        <ecNumber evidence="3">4.2.1.99</ecNumber>
    </alternativeName>
    <alternativeName>
        <fullName evidence="7">RNA-binding protein</fullName>
    </alternativeName>
</protein>
<organism>
    <name type="scientific">Legionella pneumophila subsp. pneumophila (strain Philadelphia 1 / ATCC 33152 / DSM 7513)</name>
    <dbReference type="NCBI Taxonomy" id="272624"/>
    <lineage>
        <taxon>Bacteria</taxon>
        <taxon>Pseudomonadati</taxon>
        <taxon>Pseudomonadota</taxon>
        <taxon>Gammaproteobacteria</taxon>
        <taxon>Legionellales</taxon>
        <taxon>Legionellaceae</taxon>
        <taxon>Legionella</taxon>
    </lineage>
</organism>
<proteinExistence type="evidence at protein level"/>